<proteinExistence type="inferred from homology"/>
<accession>Q6LYI7</accession>
<name>TRPF_METMP</name>
<protein>
    <recommendedName>
        <fullName evidence="1">N-(5'-phosphoribosyl)anthranilate isomerase</fullName>
        <shortName evidence="1">PRAI</shortName>
        <ecNumber evidence="1">5.3.1.24</ecNumber>
    </recommendedName>
</protein>
<sequence length="211" mass="23621">MFIKICGIKTPEELRIVENYGNATGVILECASKRRIGFETAKNLVNLANIPVFAVSTASDVSVWENIIEFTGTNYLQMHSDIDQKAIDFIKNEYGCFIMKSFKIPETSTSPEIDAEKIISEIESYEVDRILLDTGKGCGQTHDHRVSQIIAKKFDIVLAGGLDPDNVLNIVKYVKPFGIDVSSGVENNNSKDEELIKRFCENVKLGENYEM</sequence>
<evidence type="ECO:0000255" key="1">
    <source>
        <dbReference type="HAMAP-Rule" id="MF_00135"/>
    </source>
</evidence>
<organism>
    <name type="scientific">Methanococcus maripaludis (strain DSM 14266 / JCM 13030 / NBRC 101832 / S2 / LL)</name>
    <dbReference type="NCBI Taxonomy" id="267377"/>
    <lineage>
        <taxon>Archaea</taxon>
        <taxon>Methanobacteriati</taxon>
        <taxon>Methanobacteriota</taxon>
        <taxon>Methanomada group</taxon>
        <taxon>Methanococci</taxon>
        <taxon>Methanococcales</taxon>
        <taxon>Methanococcaceae</taxon>
        <taxon>Methanococcus</taxon>
    </lineage>
</organism>
<feature type="chain" id="PRO_1000057879" description="N-(5'-phosphoribosyl)anthranilate isomerase">
    <location>
        <begin position="1"/>
        <end position="211"/>
    </location>
</feature>
<comment type="catalytic activity">
    <reaction evidence="1">
        <text>N-(5-phospho-beta-D-ribosyl)anthranilate = 1-(2-carboxyphenylamino)-1-deoxy-D-ribulose 5-phosphate</text>
        <dbReference type="Rhea" id="RHEA:21540"/>
        <dbReference type="ChEBI" id="CHEBI:18277"/>
        <dbReference type="ChEBI" id="CHEBI:58613"/>
        <dbReference type="EC" id="5.3.1.24"/>
    </reaction>
</comment>
<comment type="pathway">
    <text evidence="1">Amino-acid biosynthesis; L-tryptophan biosynthesis; L-tryptophan from chorismate: step 3/5.</text>
</comment>
<comment type="similarity">
    <text evidence="1">Belongs to the TrpF family.</text>
</comment>
<gene>
    <name evidence="1" type="primary">trpF</name>
    <name type="ordered locus">MMP1004</name>
</gene>
<dbReference type="EC" id="5.3.1.24" evidence="1"/>
<dbReference type="EMBL" id="BX950229">
    <property type="protein sequence ID" value="CAF30560.1"/>
    <property type="molecule type" value="Genomic_DNA"/>
</dbReference>
<dbReference type="RefSeq" id="WP_011170948.1">
    <property type="nucleotide sequence ID" value="NC_005791.1"/>
</dbReference>
<dbReference type="SMR" id="Q6LYI7"/>
<dbReference type="STRING" id="267377.MMP1004"/>
<dbReference type="EnsemblBacteria" id="CAF30560">
    <property type="protein sequence ID" value="CAF30560"/>
    <property type="gene ID" value="MMP1004"/>
</dbReference>
<dbReference type="GeneID" id="2762600"/>
<dbReference type="KEGG" id="mmp:MMP1004"/>
<dbReference type="PATRIC" id="fig|267377.15.peg.1033"/>
<dbReference type="eggNOG" id="arCOG01983">
    <property type="taxonomic scope" value="Archaea"/>
</dbReference>
<dbReference type="HOGENOM" id="CLU_076364_2_1_2"/>
<dbReference type="OrthoDB" id="27513at2157"/>
<dbReference type="UniPathway" id="UPA00035">
    <property type="reaction ID" value="UER00042"/>
</dbReference>
<dbReference type="Proteomes" id="UP000000590">
    <property type="component" value="Chromosome"/>
</dbReference>
<dbReference type="GO" id="GO:0004640">
    <property type="term" value="F:phosphoribosylanthranilate isomerase activity"/>
    <property type="evidence" value="ECO:0007669"/>
    <property type="project" value="UniProtKB-UniRule"/>
</dbReference>
<dbReference type="GO" id="GO:0000162">
    <property type="term" value="P:L-tryptophan biosynthetic process"/>
    <property type="evidence" value="ECO:0007669"/>
    <property type="project" value="UniProtKB-UniRule"/>
</dbReference>
<dbReference type="CDD" id="cd00405">
    <property type="entry name" value="PRAI"/>
    <property type="match status" value="1"/>
</dbReference>
<dbReference type="Gene3D" id="3.20.20.70">
    <property type="entry name" value="Aldolase class I"/>
    <property type="match status" value="1"/>
</dbReference>
<dbReference type="HAMAP" id="MF_00135">
    <property type="entry name" value="PRAI"/>
    <property type="match status" value="1"/>
</dbReference>
<dbReference type="InterPro" id="IPR013785">
    <property type="entry name" value="Aldolase_TIM"/>
</dbReference>
<dbReference type="InterPro" id="IPR001240">
    <property type="entry name" value="PRAI_dom"/>
</dbReference>
<dbReference type="InterPro" id="IPR011060">
    <property type="entry name" value="RibuloseP-bd_barrel"/>
</dbReference>
<dbReference type="InterPro" id="IPR044643">
    <property type="entry name" value="TrpF_fam"/>
</dbReference>
<dbReference type="NCBIfam" id="NF002304">
    <property type="entry name" value="PRK01222.2-4"/>
    <property type="match status" value="1"/>
</dbReference>
<dbReference type="PANTHER" id="PTHR42894">
    <property type="entry name" value="N-(5'-PHOSPHORIBOSYL)ANTHRANILATE ISOMERASE"/>
    <property type="match status" value="1"/>
</dbReference>
<dbReference type="PANTHER" id="PTHR42894:SF1">
    <property type="entry name" value="N-(5'-PHOSPHORIBOSYL)ANTHRANILATE ISOMERASE"/>
    <property type="match status" value="1"/>
</dbReference>
<dbReference type="Pfam" id="PF00697">
    <property type="entry name" value="PRAI"/>
    <property type="match status" value="1"/>
</dbReference>
<dbReference type="SUPFAM" id="SSF51366">
    <property type="entry name" value="Ribulose-phoshate binding barrel"/>
    <property type="match status" value="1"/>
</dbReference>
<keyword id="KW-0028">Amino-acid biosynthesis</keyword>
<keyword id="KW-0057">Aromatic amino acid biosynthesis</keyword>
<keyword id="KW-0413">Isomerase</keyword>
<keyword id="KW-1185">Reference proteome</keyword>
<keyword id="KW-0822">Tryptophan biosynthesis</keyword>
<reference key="1">
    <citation type="journal article" date="2004" name="J. Bacteriol.">
        <title>Complete genome sequence of the genetically tractable hydrogenotrophic methanogen Methanococcus maripaludis.</title>
        <authorList>
            <person name="Hendrickson E.L."/>
            <person name="Kaul R."/>
            <person name="Zhou Y."/>
            <person name="Bovee D."/>
            <person name="Chapman P."/>
            <person name="Chung J."/>
            <person name="Conway de Macario E."/>
            <person name="Dodsworth J.A."/>
            <person name="Gillett W."/>
            <person name="Graham D.E."/>
            <person name="Hackett M."/>
            <person name="Haydock A.K."/>
            <person name="Kang A."/>
            <person name="Land M.L."/>
            <person name="Levy R."/>
            <person name="Lie T.J."/>
            <person name="Major T.A."/>
            <person name="Moore B.C."/>
            <person name="Porat I."/>
            <person name="Palmeiri A."/>
            <person name="Rouse G."/>
            <person name="Saenphimmachak C."/>
            <person name="Soell D."/>
            <person name="Van Dien S."/>
            <person name="Wang T."/>
            <person name="Whitman W.B."/>
            <person name="Xia Q."/>
            <person name="Zhang Y."/>
            <person name="Larimer F.W."/>
            <person name="Olson M.V."/>
            <person name="Leigh J.A."/>
        </authorList>
    </citation>
    <scope>NUCLEOTIDE SEQUENCE [LARGE SCALE GENOMIC DNA]</scope>
    <source>
        <strain>DSM 14266 / JCM 13030 / NBRC 101832 / S2 / LL</strain>
    </source>
</reference>